<proteinExistence type="inferred from homology"/>
<protein>
    <recommendedName>
        <fullName>Uncharacterized epimerase/dehydratase SAR0558</fullName>
    </recommendedName>
</protein>
<comment type="similarity">
    <text evidence="1">Belongs to the NAD(P)-dependent epimerase/dehydratase family.</text>
</comment>
<reference key="1">
    <citation type="journal article" date="2004" name="Proc. Natl. Acad. Sci. U.S.A.">
        <title>Complete genomes of two clinical Staphylococcus aureus strains: evidence for the rapid evolution of virulence and drug resistance.</title>
        <authorList>
            <person name="Holden M.T.G."/>
            <person name="Feil E.J."/>
            <person name="Lindsay J.A."/>
            <person name="Peacock S.J."/>
            <person name="Day N.P.J."/>
            <person name="Enright M.C."/>
            <person name="Foster T.J."/>
            <person name="Moore C.E."/>
            <person name="Hurst L."/>
            <person name="Atkin R."/>
            <person name="Barron A."/>
            <person name="Bason N."/>
            <person name="Bentley S.D."/>
            <person name="Chillingworth C."/>
            <person name="Chillingworth T."/>
            <person name="Churcher C."/>
            <person name="Clark L."/>
            <person name="Corton C."/>
            <person name="Cronin A."/>
            <person name="Doggett J."/>
            <person name="Dowd L."/>
            <person name="Feltwell T."/>
            <person name="Hance Z."/>
            <person name="Harris B."/>
            <person name="Hauser H."/>
            <person name="Holroyd S."/>
            <person name="Jagels K."/>
            <person name="James K.D."/>
            <person name="Lennard N."/>
            <person name="Line A."/>
            <person name="Mayes R."/>
            <person name="Moule S."/>
            <person name="Mungall K."/>
            <person name="Ormond D."/>
            <person name="Quail M.A."/>
            <person name="Rabbinowitsch E."/>
            <person name="Rutherford K.M."/>
            <person name="Sanders M."/>
            <person name="Sharp S."/>
            <person name="Simmonds M."/>
            <person name="Stevens K."/>
            <person name="Whitehead S."/>
            <person name="Barrell B.G."/>
            <person name="Spratt B.G."/>
            <person name="Parkhill J."/>
        </authorList>
    </citation>
    <scope>NUCLEOTIDE SEQUENCE [LARGE SCALE GENOMIC DNA]</scope>
    <source>
        <strain>MRSA252</strain>
    </source>
</reference>
<accession>Q6GJB5</accession>
<organism>
    <name type="scientific">Staphylococcus aureus (strain MRSA252)</name>
    <dbReference type="NCBI Taxonomy" id="282458"/>
    <lineage>
        <taxon>Bacteria</taxon>
        <taxon>Bacillati</taxon>
        <taxon>Bacillota</taxon>
        <taxon>Bacilli</taxon>
        <taxon>Bacillales</taxon>
        <taxon>Staphylococcaceae</taxon>
        <taxon>Staphylococcus</taxon>
    </lineage>
</organism>
<name>Y558_STAAR</name>
<evidence type="ECO:0000305" key="1"/>
<feature type="chain" id="PRO_0000270848" description="Uncharacterized epimerase/dehydratase SAR0558">
    <location>
        <begin position="1"/>
        <end position="321"/>
    </location>
</feature>
<dbReference type="EMBL" id="BX571856">
    <property type="protein sequence ID" value="CAG39579.1"/>
    <property type="molecule type" value="Genomic_DNA"/>
</dbReference>
<dbReference type="RefSeq" id="WP_000723304.1">
    <property type="nucleotide sequence ID" value="NC_002952.2"/>
</dbReference>
<dbReference type="SMR" id="Q6GJB5"/>
<dbReference type="KEGG" id="sar:SAR0558"/>
<dbReference type="HOGENOM" id="CLU_007383_19_1_9"/>
<dbReference type="Proteomes" id="UP000000596">
    <property type="component" value="Chromosome"/>
</dbReference>
<dbReference type="GO" id="GO:0008743">
    <property type="term" value="F:L-threonine 3-dehydrogenase activity"/>
    <property type="evidence" value="ECO:0007669"/>
    <property type="project" value="TreeGrafter"/>
</dbReference>
<dbReference type="GO" id="GO:0006567">
    <property type="term" value="P:threonine catabolic process"/>
    <property type="evidence" value="ECO:0007669"/>
    <property type="project" value="TreeGrafter"/>
</dbReference>
<dbReference type="FunFam" id="3.40.50.720:FF:000077">
    <property type="entry name" value="L-threonine 3-dehydrogenase, mitochondrial"/>
    <property type="match status" value="1"/>
</dbReference>
<dbReference type="Gene3D" id="3.40.50.720">
    <property type="entry name" value="NAD(P)-binding Rossmann-like Domain"/>
    <property type="match status" value="1"/>
</dbReference>
<dbReference type="InterPro" id="IPR001509">
    <property type="entry name" value="Epimerase_deHydtase"/>
</dbReference>
<dbReference type="InterPro" id="IPR036291">
    <property type="entry name" value="NAD(P)-bd_dom_sf"/>
</dbReference>
<dbReference type="InterPro" id="IPR051225">
    <property type="entry name" value="NAD(P)_epim/dehydratase"/>
</dbReference>
<dbReference type="PANTHER" id="PTHR42687">
    <property type="entry name" value="L-THREONINE 3-DEHYDROGENASE"/>
    <property type="match status" value="1"/>
</dbReference>
<dbReference type="PANTHER" id="PTHR42687:SF1">
    <property type="entry name" value="L-THREONINE 3-DEHYDROGENASE, MITOCHONDRIAL"/>
    <property type="match status" value="1"/>
</dbReference>
<dbReference type="Pfam" id="PF01370">
    <property type="entry name" value="Epimerase"/>
    <property type="match status" value="1"/>
</dbReference>
<dbReference type="SUPFAM" id="SSF51735">
    <property type="entry name" value="NAD(P)-binding Rossmann-fold domains"/>
    <property type="match status" value="1"/>
</dbReference>
<sequence length="321" mass="36082">MKKIMITGALGQIGTELVVKCREIYGTDNVLATDIREPEADSPVQNGPFEILDVTDRDRMFELVRDFEADSLMHMAALLSATAEKNPILAWDLNMGGLMNALEAARTYNLHFFTPSSIGAFGDSTPKVNTPQVTIQQPTTMYGVNKVAGELLCQYYFTRFGVDTRSVRFPGLISHVKEPGGGTTDYAVEIYFKAVREGHYTSFIDKGTYMDMMYMDDAIDAIIKLMEADDAKLETRNGYNLSAMSFDPEMVKEAIQEYYPDFKLEYDVDPIRQGIANSWPDSIDTSCSRGEWGFDPKYDLVSMTKLMLEAIEQKDTVKNNN</sequence>
<gene>
    <name type="ordered locus">SAR0558</name>
</gene>